<comment type="function">
    <text evidence="1">Cell wall formation.</text>
</comment>
<comment type="catalytic activity">
    <reaction evidence="1">
        <text>UDP-N-acetyl-alpha-D-muramate + NADP(+) = UDP-N-acetyl-3-O-(1-carboxyvinyl)-alpha-D-glucosamine + NADPH + H(+)</text>
        <dbReference type="Rhea" id="RHEA:12248"/>
        <dbReference type="ChEBI" id="CHEBI:15378"/>
        <dbReference type="ChEBI" id="CHEBI:57783"/>
        <dbReference type="ChEBI" id="CHEBI:58349"/>
        <dbReference type="ChEBI" id="CHEBI:68483"/>
        <dbReference type="ChEBI" id="CHEBI:70757"/>
        <dbReference type="EC" id="1.3.1.98"/>
    </reaction>
</comment>
<comment type="cofactor">
    <cofactor evidence="1">
        <name>FAD</name>
        <dbReference type="ChEBI" id="CHEBI:57692"/>
    </cofactor>
</comment>
<comment type="pathway">
    <text evidence="1">Cell wall biogenesis; peptidoglycan biosynthesis.</text>
</comment>
<comment type="subcellular location">
    <subcellularLocation>
        <location evidence="1">Cytoplasm</location>
    </subcellularLocation>
</comment>
<comment type="similarity">
    <text evidence="1">Belongs to the MurB family.</text>
</comment>
<feature type="chain" id="PRO_1000191405" description="UDP-N-acetylenolpyruvoylglucosamine reductase">
    <location>
        <begin position="1"/>
        <end position="346"/>
    </location>
</feature>
<feature type="domain" description="FAD-binding PCMH-type" evidence="1">
    <location>
        <begin position="23"/>
        <end position="194"/>
    </location>
</feature>
<feature type="active site" evidence="1">
    <location>
        <position position="170"/>
    </location>
</feature>
<feature type="active site" description="Proton donor" evidence="1">
    <location>
        <position position="246"/>
    </location>
</feature>
<feature type="active site" evidence="1">
    <location>
        <position position="342"/>
    </location>
</feature>
<proteinExistence type="inferred from homology"/>
<gene>
    <name evidence="1" type="primary">murB</name>
    <name type="ordered locus">Bphy_0528</name>
</gene>
<reference key="1">
    <citation type="journal article" date="2014" name="Stand. Genomic Sci.">
        <title>Complete genome sequence of Burkholderia phymatum STM815(T), a broad host range and efficient nitrogen-fixing symbiont of Mimosa species.</title>
        <authorList>
            <person name="Moulin L."/>
            <person name="Klonowska A."/>
            <person name="Caroline B."/>
            <person name="Booth K."/>
            <person name="Vriezen J.A."/>
            <person name="Melkonian R."/>
            <person name="James E.K."/>
            <person name="Young J.P."/>
            <person name="Bena G."/>
            <person name="Hauser L."/>
            <person name="Land M."/>
            <person name="Kyrpides N."/>
            <person name="Bruce D."/>
            <person name="Chain P."/>
            <person name="Copeland A."/>
            <person name="Pitluck S."/>
            <person name="Woyke T."/>
            <person name="Lizotte-Waniewski M."/>
            <person name="Bristow J."/>
            <person name="Riley M."/>
        </authorList>
    </citation>
    <scope>NUCLEOTIDE SEQUENCE [LARGE SCALE GENOMIC DNA]</scope>
    <source>
        <strain>DSM 17167 / CIP 108236 / LMG 21445 / STM815</strain>
    </source>
</reference>
<accession>B2JDU4</accession>
<organism>
    <name type="scientific">Paraburkholderia phymatum (strain DSM 17167 / CIP 108236 / LMG 21445 / STM815)</name>
    <name type="common">Burkholderia phymatum</name>
    <dbReference type="NCBI Taxonomy" id="391038"/>
    <lineage>
        <taxon>Bacteria</taxon>
        <taxon>Pseudomonadati</taxon>
        <taxon>Pseudomonadota</taxon>
        <taxon>Betaproteobacteria</taxon>
        <taxon>Burkholderiales</taxon>
        <taxon>Burkholderiaceae</taxon>
        <taxon>Paraburkholderia</taxon>
    </lineage>
</organism>
<protein>
    <recommendedName>
        <fullName evidence="1">UDP-N-acetylenolpyruvoylglucosamine reductase</fullName>
        <ecNumber evidence="1">1.3.1.98</ecNumber>
    </recommendedName>
    <alternativeName>
        <fullName evidence="1">UDP-N-acetylmuramate dehydrogenase</fullName>
    </alternativeName>
</protein>
<dbReference type="EC" id="1.3.1.98" evidence="1"/>
<dbReference type="EMBL" id="CP001043">
    <property type="protein sequence ID" value="ACC69720.1"/>
    <property type="molecule type" value="Genomic_DNA"/>
</dbReference>
<dbReference type="RefSeq" id="WP_012399945.1">
    <property type="nucleotide sequence ID" value="NC_010622.1"/>
</dbReference>
<dbReference type="SMR" id="B2JDU4"/>
<dbReference type="STRING" id="391038.Bphy_0528"/>
<dbReference type="KEGG" id="bph:Bphy_0528"/>
<dbReference type="eggNOG" id="COG0812">
    <property type="taxonomic scope" value="Bacteria"/>
</dbReference>
<dbReference type="HOGENOM" id="CLU_035304_0_0_4"/>
<dbReference type="OrthoDB" id="9804753at2"/>
<dbReference type="UniPathway" id="UPA00219"/>
<dbReference type="Proteomes" id="UP000001192">
    <property type="component" value="Chromosome 1"/>
</dbReference>
<dbReference type="GO" id="GO:0005829">
    <property type="term" value="C:cytosol"/>
    <property type="evidence" value="ECO:0007669"/>
    <property type="project" value="TreeGrafter"/>
</dbReference>
<dbReference type="GO" id="GO:0071949">
    <property type="term" value="F:FAD binding"/>
    <property type="evidence" value="ECO:0007669"/>
    <property type="project" value="InterPro"/>
</dbReference>
<dbReference type="GO" id="GO:0008762">
    <property type="term" value="F:UDP-N-acetylmuramate dehydrogenase activity"/>
    <property type="evidence" value="ECO:0007669"/>
    <property type="project" value="UniProtKB-UniRule"/>
</dbReference>
<dbReference type="GO" id="GO:0051301">
    <property type="term" value="P:cell division"/>
    <property type="evidence" value="ECO:0007669"/>
    <property type="project" value="UniProtKB-KW"/>
</dbReference>
<dbReference type="GO" id="GO:0071555">
    <property type="term" value="P:cell wall organization"/>
    <property type="evidence" value="ECO:0007669"/>
    <property type="project" value="UniProtKB-KW"/>
</dbReference>
<dbReference type="GO" id="GO:0009252">
    <property type="term" value="P:peptidoglycan biosynthetic process"/>
    <property type="evidence" value="ECO:0007669"/>
    <property type="project" value="UniProtKB-UniRule"/>
</dbReference>
<dbReference type="GO" id="GO:0008360">
    <property type="term" value="P:regulation of cell shape"/>
    <property type="evidence" value="ECO:0007669"/>
    <property type="project" value="UniProtKB-KW"/>
</dbReference>
<dbReference type="Gene3D" id="3.30.465.10">
    <property type="match status" value="1"/>
</dbReference>
<dbReference type="Gene3D" id="3.90.78.10">
    <property type="entry name" value="UDP-N-acetylenolpyruvoylglucosamine reductase, C-terminal domain"/>
    <property type="match status" value="1"/>
</dbReference>
<dbReference type="Gene3D" id="3.30.43.10">
    <property type="entry name" value="Uridine Diphospho-n-acetylenolpyruvylglucosamine Reductase, domain 2"/>
    <property type="match status" value="1"/>
</dbReference>
<dbReference type="HAMAP" id="MF_00037">
    <property type="entry name" value="MurB"/>
    <property type="match status" value="1"/>
</dbReference>
<dbReference type="InterPro" id="IPR016166">
    <property type="entry name" value="FAD-bd_PCMH"/>
</dbReference>
<dbReference type="InterPro" id="IPR036318">
    <property type="entry name" value="FAD-bd_PCMH-like_sf"/>
</dbReference>
<dbReference type="InterPro" id="IPR016167">
    <property type="entry name" value="FAD-bd_PCMH_sub1"/>
</dbReference>
<dbReference type="InterPro" id="IPR016169">
    <property type="entry name" value="FAD-bd_PCMH_sub2"/>
</dbReference>
<dbReference type="InterPro" id="IPR003170">
    <property type="entry name" value="MurB"/>
</dbReference>
<dbReference type="InterPro" id="IPR011601">
    <property type="entry name" value="MurB_C"/>
</dbReference>
<dbReference type="InterPro" id="IPR036635">
    <property type="entry name" value="MurB_C_sf"/>
</dbReference>
<dbReference type="InterPro" id="IPR006094">
    <property type="entry name" value="Oxid_FAD_bind_N"/>
</dbReference>
<dbReference type="NCBIfam" id="TIGR00179">
    <property type="entry name" value="murB"/>
    <property type="match status" value="1"/>
</dbReference>
<dbReference type="NCBIfam" id="NF000755">
    <property type="entry name" value="PRK00046.1"/>
    <property type="match status" value="1"/>
</dbReference>
<dbReference type="NCBIfam" id="NF010478">
    <property type="entry name" value="PRK13903.1"/>
    <property type="match status" value="1"/>
</dbReference>
<dbReference type="PANTHER" id="PTHR21071">
    <property type="entry name" value="UDP-N-ACETYLENOLPYRUVOYLGLUCOSAMINE REDUCTASE"/>
    <property type="match status" value="1"/>
</dbReference>
<dbReference type="PANTHER" id="PTHR21071:SF4">
    <property type="entry name" value="UDP-N-ACETYLENOLPYRUVOYLGLUCOSAMINE REDUCTASE"/>
    <property type="match status" value="1"/>
</dbReference>
<dbReference type="Pfam" id="PF01565">
    <property type="entry name" value="FAD_binding_4"/>
    <property type="match status" value="1"/>
</dbReference>
<dbReference type="Pfam" id="PF02873">
    <property type="entry name" value="MurB_C"/>
    <property type="match status" value="1"/>
</dbReference>
<dbReference type="SUPFAM" id="SSF56176">
    <property type="entry name" value="FAD-binding/transporter-associated domain-like"/>
    <property type="match status" value="1"/>
</dbReference>
<dbReference type="SUPFAM" id="SSF56194">
    <property type="entry name" value="Uridine diphospho-N-Acetylenolpyruvylglucosamine reductase, MurB, C-terminal domain"/>
    <property type="match status" value="1"/>
</dbReference>
<dbReference type="PROSITE" id="PS51387">
    <property type="entry name" value="FAD_PCMH"/>
    <property type="match status" value="1"/>
</dbReference>
<keyword id="KW-0131">Cell cycle</keyword>
<keyword id="KW-0132">Cell division</keyword>
<keyword id="KW-0133">Cell shape</keyword>
<keyword id="KW-0961">Cell wall biogenesis/degradation</keyword>
<keyword id="KW-0963">Cytoplasm</keyword>
<keyword id="KW-0274">FAD</keyword>
<keyword id="KW-0285">Flavoprotein</keyword>
<keyword id="KW-0521">NADP</keyword>
<keyword id="KW-0560">Oxidoreductase</keyword>
<keyword id="KW-0573">Peptidoglycan synthesis</keyword>
<keyword id="KW-1185">Reference proteome</keyword>
<name>MURB_PARP8</name>
<evidence type="ECO:0000255" key="1">
    <source>
        <dbReference type="HAMAP-Rule" id="MF_00037"/>
    </source>
</evidence>
<sequence length="346" mass="37270">MSQPESLPFIADFPLKPHNTFGFDVRARLACRIETDAQLLAALRDPRAAGLRRLVLGGGSNVVLTGDFDGLVLLVALRGRKVVREDDEAWYVEAAAGENWHEFVSWTLAEGMPGLENLALIPGTVGAAPIQNIGAYGLEMCERFASLRAVELATGKLVELGAGACRFGYRDSFFKQEGRERFVIVSVTFRLPKVWAPRAGYTDIARQLAAVGLGDATPTPQAIFDAVVAVRRAKLPDPFVLGNAGSFFKNPVVESAQFDALAAKEPEIVSYRQADGRVKLAAGWLIDRCGWKGRTLGAAGVHERQALVLVNRGGASGTEVLALAKAIQQDVAQRFGVELEAEPVCL</sequence>